<gene>
    <name evidence="1" type="primary">rpsO</name>
    <name type="ordered locus">Wbm0020</name>
</gene>
<evidence type="ECO:0000255" key="1">
    <source>
        <dbReference type="HAMAP-Rule" id="MF_01343"/>
    </source>
</evidence>
<evidence type="ECO:0000305" key="2"/>
<reference key="1">
    <citation type="journal article" date="2005" name="PLoS Biol.">
        <title>The Wolbachia genome of Brugia malayi: endosymbiont evolution within a human pathogenic nematode.</title>
        <authorList>
            <person name="Foster J."/>
            <person name="Ganatra M."/>
            <person name="Kamal I."/>
            <person name="Ware J."/>
            <person name="Makarova K."/>
            <person name="Ivanova N."/>
            <person name="Bhattacharyya A."/>
            <person name="Kapatral V."/>
            <person name="Kumar S."/>
            <person name="Posfai J."/>
            <person name="Vincze T."/>
            <person name="Ingram J."/>
            <person name="Moran L."/>
            <person name="Lapidus A."/>
            <person name="Omelchenko M."/>
            <person name="Kyrpides N."/>
            <person name="Ghedin E."/>
            <person name="Wang S."/>
            <person name="Goltsman E."/>
            <person name="Joukov V."/>
            <person name="Ostrovskaya O."/>
            <person name="Tsukerman K."/>
            <person name="Mazur M."/>
            <person name="Comb D."/>
            <person name="Koonin E."/>
            <person name="Slatko B."/>
        </authorList>
    </citation>
    <scope>NUCLEOTIDE SEQUENCE [LARGE SCALE GENOMIC DNA]</scope>
    <source>
        <strain>TRS</strain>
    </source>
</reference>
<accession>Q5GTR2</accession>
<organism>
    <name type="scientific">Wolbachia sp. subsp. Brugia malayi (strain TRS)</name>
    <dbReference type="NCBI Taxonomy" id="292805"/>
    <lineage>
        <taxon>Bacteria</taxon>
        <taxon>Pseudomonadati</taxon>
        <taxon>Pseudomonadota</taxon>
        <taxon>Alphaproteobacteria</taxon>
        <taxon>Rickettsiales</taxon>
        <taxon>Anaplasmataceae</taxon>
        <taxon>Wolbachieae</taxon>
        <taxon>Wolbachia</taxon>
    </lineage>
</organism>
<comment type="function">
    <text evidence="1">One of the primary rRNA binding proteins, it binds directly to 16S rRNA where it helps nucleate assembly of the platform of the 30S subunit by binding and bridging several RNA helices of the 16S rRNA.</text>
</comment>
<comment type="function">
    <text evidence="1">Forms an intersubunit bridge (bridge B4) with the 23S rRNA of the 50S subunit in the ribosome.</text>
</comment>
<comment type="subunit">
    <text evidence="1">Part of the 30S ribosomal subunit. Forms a bridge to the 50S subunit in the 70S ribosome, contacting the 23S rRNA.</text>
</comment>
<comment type="similarity">
    <text evidence="1">Belongs to the universal ribosomal protein uS15 family.</text>
</comment>
<keyword id="KW-1185">Reference proteome</keyword>
<keyword id="KW-0687">Ribonucleoprotein</keyword>
<keyword id="KW-0689">Ribosomal protein</keyword>
<keyword id="KW-0694">RNA-binding</keyword>
<keyword id="KW-0699">rRNA-binding</keyword>
<protein>
    <recommendedName>
        <fullName evidence="1">Small ribosomal subunit protein uS15</fullName>
    </recommendedName>
    <alternativeName>
        <fullName evidence="2">30S ribosomal protein S15</fullName>
    </alternativeName>
</protein>
<feature type="chain" id="PRO_0000115588" description="Small ribosomal subunit protein uS15">
    <location>
        <begin position="1"/>
        <end position="90"/>
    </location>
</feature>
<proteinExistence type="inferred from homology"/>
<name>RS15_WOLTR</name>
<dbReference type="EMBL" id="AE017321">
    <property type="protein sequence ID" value="AAW70612.1"/>
    <property type="molecule type" value="Genomic_DNA"/>
</dbReference>
<dbReference type="RefSeq" id="WP_011256222.1">
    <property type="nucleotide sequence ID" value="NC_006833.1"/>
</dbReference>
<dbReference type="SMR" id="Q5GTR2"/>
<dbReference type="STRING" id="292805.Wbm0020"/>
<dbReference type="KEGG" id="wbm:Wbm0020"/>
<dbReference type="eggNOG" id="COG0184">
    <property type="taxonomic scope" value="Bacteria"/>
</dbReference>
<dbReference type="HOGENOM" id="CLU_148518_0_0_5"/>
<dbReference type="Proteomes" id="UP000000534">
    <property type="component" value="Chromosome"/>
</dbReference>
<dbReference type="GO" id="GO:0022627">
    <property type="term" value="C:cytosolic small ribosomal subunit"/>
    <property type="evidence" value="ECO:0007669"/>
    <property type="project" value="TreeGrafter"/>
</dbReference>
<dbReference type="GO" id="GO:0019843">
    <property type="term" value="F:rRNA binding"/>
    <property type="evidence" value="ECO:0007669"/>
    <property type="project" value="UniProtKB-UniRule"/>
</dbReference>
<dbReference type="GO" id="GO:0003735">
    <property type="term" value="F:structural constituent of ribosome"/>
    <property type="evidence" value="ECO:0007669"/>
    <property type="project" value="InterPro"/>
</dbReference>
<dbReference type="GO" id="GO:0006412">
    <property type="term" value="P:translation"/>
    <property type="evidence" value="ECO:0007669"/>
    <property type="project" value="UniProtKB-UniRule"/>
</dbReference>
<dbReference type="CDD" id="cd00353">
    <property type="entry name" value="Ribosomal_S15p_S13e"/>
    <property type="match status" value="1"/>
</dbReference>
<dbReference type="FunFam" id="1.10.287.10:FF:000002">
    <property type="entry name" value="30S ribosomal protein S15"/>
    <property type="match status" value="1"/>
</dbReference>
<dbReference type="Gene3D" id="6.10.250.3130">
    <property type="match status" value="1"/>
</dbReference>
<dbReference type="Gene3D" id="1.10.287.10">
    <property type="entry name" value="S15/NS1, RNA-binding"/>
    <property type="match status" value="1"/>
</dbReference>
<dbReference type="HAMAP" id="MF_01343_B">
    <property type="entry name" value="Ribosomal_uS15_B"/>
    <property type="match status" value="1"/>
</dbReference>
<dbReference type="InterPro" id="IPR000589">
    <property type="entry name" value="Ribosomal_uS15"/>
</dbReference>
<dbReference type="InterPro" id="IPR005290">
    <property type="entry name" value="Ribosomal_uS15_bac-type"/>
</dbReference>
<dbReference type="InterPro" id="IPR009068">
    <property type="entry name" value="uS15_NS1_RNA-bd_sf"/>
</dbReference>
<dbReference type="NCBIfam" id="TIGR00952">
    <property type="entry name" value="S15_bact"/>
    <property type="match status" value="1"/>
</dbReference>
<dbReference type="PANTHER" id="PTHR23321">
    <property type="entry name" value="RIBOSOMAL PROTEIN S15, BACTERIAL AND ORGANELLAR"/>
    <property type="match status" value="1"/>
</dbReference>
<dbReference type="PANTHER" id="PTHR23321:SF26">
    <property type="entry name" value="SMALL RIBOSOMAL SUBUNIT PROTEIN US15M"/>
    <property type="match status" value="1"/>
</dbReference>
<dbReference type="Pfam" id="PF00312">
    <property type="entry name" value="Ribosomal_S15"/>
    <property type="match status" value="1"/>
</dbReference>
<dbReference type="SMART" id="SM01387">
    <property type="entry name" value="Ribosomal_S15"/>
    <property type="match status" value="1"/>
</dbReference>
<dbReference type="SUPFAM" id="SSF47060">
    <property type="entry name" value="S15/NS1 RNA-binding domain"/>
    <property type="match status" value="1"/>
</dbReference>
<sequence>MSITSEKKKNLINTYAIKEDDTGSSFVQCAILTERISNLTEHFKVHKHDHHSKRGLLILIGRRRKHLNYIKRKFGDEAYQQLIEKLGIRK</sequence>